<protein>
    <recommendedName>
        <fullName evidence="1">Recombination protein RecR</fullName>
    </recommendedName>
</protein>
<sequence>MIQYPEPLAKLIESYTKLPGIGQKTATRLAFYTLSMQEDDVTNFAKSLLSAKRDLHNCSICGNITEDDPCPICRDKTRDHSQILVVEQSQDVMAMERMHEYHGLYHVLHGVISPVAGTGPEDINITSLLKRLKKDDEVKEIIIATNASSDGELTAGYLAKLIKPAGIKVTRLAHGLSVGADIDYADEMTLFKAVQGRTEM</sequence>
<comment type="function">
    <text evidence="1">May play a role in DNA repair. It seems to be involved in an RecBC-independent recombinational process of DNA repair. It may act with RecF and RecO.</text>
</comment>
<comment type="similarity">
    <text evidence="1">Belongs to the RecR family.</text>
</comment>
<dbReference type="EMBL" id="AP007281">
    <property type="protein sequence ID" value="BAG24833.1"/>
    <property type="molecule type" value="Genomic_DNA"/>
</dbReference>
<dbReference type="SMR" id="B2G5V1"/>
<dbReference type="KEGG" id="lrf:LAR_0317"/>
<dbReference type="HOGENOM" id="CLU_060739_1_0_9"/>
<dbReference type="GO" id="GO:0003677">
    <property type="term" value="F:DNA binding"/>
    <property type="evidence" value="ECO:0007669"/>
    <property type="project" value="UniProtKB-UniRule"/>
</dbReference>
<dbReference type="GO" id="GO:0008270">
    <property type="term" value="F:zinc ion binding"/>
    <property type="evidence" value="ECO:0007669"/>
    <property type="project" value="UniProtKB-KW"/>
</dbReference>
<dbReference type="GO" id="GO:0006310">
    <property type="term" value="P:DNA recombination"/>
    <property type="evidence" value="ECO:0007669"/>
    <property type="project" value="UniProtKB-UniRule"/>
</dbReference>
<dbReference type="GO" id="GO:0006281">
    <property type="term" value="P:DNA repair"/>
    <property type="evidence" value="ECO:0007669"/>
    <property type="project" value="UniProtKB-UniRule"/>
</dbReference>
<dbReference type="CDD" id="cd01025">
    <property type="entry name" value="TOPRIM_recR"/>
    <property type="match status" value="1"/>
</dbReference>
<dbReference type="Gene3D" id="3.30.60.80">
    <property type="match status" value="1"/>
</dbReference>
<dbReference type="Gene3D" id="3.40.1360.10">
    <property type="match status" value="1"/>
</dbReference>
<dbReference type="Gene3D" id="6.10.250.240">
    <property type="match status" value="1"/>
</dbReference>
<dbReference type="Gene3D" id="1.10.8.420">
    <property type="entry name" value="RecR Domain 1"/>
    <property type="match status" value="1"/>
</dbReference>
<dbReference type="HAMAP" id="MF_00017">
    <property type="entry name" value="RecR"/>
    <property type="match status" value="1"/>
</dbReference>
<dbReference type="InterPro" id="IPR000093">
    <property type="entry name" value="DNA_Rcmb_RecR"/>
</dbReference>
<dbReference type="InterPro" id="IPR023627">
    <property type="entry name" value="Rcmb_RecR"/>
</dbReference>
<dbReference type="InterPro" id="IPR015967">
    <property type="entry name" value="Rcmb_RecR_Znf"/>
</dbReference>
<dbReference type="InterPro" id="IPR006171">
    <property type="entry name" value="TOPRIM_dom"/>
</dbReference>
<dbReference type="InterPro" id="IPR034137">
    <property type="entry name" value="TOPRIM_RecR"/>
</dbReference>
<dbReference type="NCBIfam" id="TIGR00615">
    <property type="entry name" value="recR"/>
    <property type="match status" value="1"/>
</dbReference>
<dbReference type="PANTHER" id="PTHR30446">
    <property type="entry name" value="RECOMBINATION PROTEIN RECR"/>
    <property type="match status" value="1"/>
</dbReference>
<dbReference type="PANTHER" id="PTHR30446:SF0">
    <property type="entry name" value="RECOMBINATION PROTEIN RECR"/>
    <property type="match status" value="1"/>
</dbReference>
<dbReference type="Pfam" id="PF21175">
    <property type="entry name" value="RecR_C"/>
    <property type="match status" value="1"/>
</dbReference>
<dbReference type="Pfam" id="PF21176">
    <property type="entry name" value="RecR_HhH"/>
    <property type="match status" value="1"/>
</dbReference>
<dbReference type="Pfam" id="PF02132">
    <property type="entry name" value="RecR_ZnF"/>
    <property type="match status" value="1"/>
</dbReference>
<dbReference type="Pfam" id="PF13662">
    <property type="entry name" value="Toprim_4"/>
    <property type="match status" value="1"/>
</dbReference>
<dbReference type="SMART" id="SM00493">
    <property type="entry name" value="TOPRIM"/>
    <property type="match status" value="1"/>
</dbReference>
<dbReference type="SUPFAM" id="SSF111304">
    <property type="entry name" value="Recombination protein RecR"/>
    <property type="match status" value="1"/>
</dbReference>
<dbReference type="PROSITE" id="PS01300">
    <property type="entry name" value="RECR"/>
    <property type="match status" value="1"/>
</dbReference>
<dbReference type="PROSITE" id="PS50880">
    <property type="entry name" value="TOPRIM"/>
    <property type="match status" value="1"/>
</dbReference>
<accession>B2G5V1</accession>
<gene>
    <name evidence="1" type="primary">recR</name>
    <name type="ordered locus">LAR_0317</name>
</gene>
<organism>
    <name type="scientific">Limosilactobacillus reuteri subsp. reuteri (strain JCM 1112)</name>
    <name type="common">Lactobacillus reuteri</name>
    <dbReference type="NCBI Taxonomy" id="557433"/>
    <lineage>
        <taxon>Bacteria</taxon>
        <taxon>Bacillati</taxon>
        <taxon>Bacillota</taxon>
        <taxon>Bacilli</taxon>
        <taxon>Lactobacillales</taxon>
        <taxon>Lactobacillaceae</taxon>
        <taxon>Limosilactobacillus</taxon>
    </lineage>
</organism>
<evidence type="ECO:0000255" key="1">
    <source>
        <dbReference type="HAMAP-Rule" id="MF_00017"/>
    </source>
</evidence>
<reference key="1">
    <citation type="journal article" date="2008" name="DNA Res.">
        <title>Comparative genome analysis of Lactobacillus reuteri and Lactobacillus fermentum reveal a genomic island for reuterin and cobalamin production.</title>
        <authorList>
            <person name="Morita H."/>
            <person name="Toh H."/>
            <person name="Fukuda S."/>
            <person name="Horikawa H."/>
            <person name="Oshima K."/>
            <person name="Suzuki T."/>
            <person name="Murakami M."/>
            <person name="Hisamatsu S."/>
            <person name="Kato Y."/>
            <person name="Takizawa T."/>
            <person name="Fukuoka H."/>
            <person name="Yoshimura T."/>
            <person name="Itoh K."/>
            <person name="O'Sullivan D.J."/>
            <person name="McKay L.L."/>
            <person name="Ohno H."/>
            <person name="Kikuchi J."/>
            <person name="Masaoka T."/>
            <person name="Hattori M."/>
        </authorList>
    </citation>
    <scope>NUCLEOTIDE SEQUENCE [LARGE SCALE GENOMIC DNA]</scope>
    <source>
        <strain>JCM 1112</strain>
    </source>
</reference>
<name>RECR_LIMRJ</name>
<keyword id="KW-0227">DNA damage</keyword>
<keyword id="KW-0233">DNA recombination</keyword>
<keyword id="KW-0234">DNA repair</keyword>
<keyword id="KW-0479">Metal-binding</keyword>
<keyword id="KW-0862">Zinc</keyword>
<keyword id="KW-0863">Zinc-finger</keyword>
<feature type="chain" id="PRO_1000089742" description="Recombination protein RecR">
    <location>
        <begin position="1"/>
        <end position="200"/>
    </location>
</feature>
<feature type="domain" description="Toprim" evidence="1">
    <location>
        <begin position="81"/>
        <end position="177"/>
    </location>
</feature>
<feature type="zinc finger region" description="C4-type" evidence="1">
    <location>
        <begin position="58"/>
        <end position="73"/>
    </location>
</feature>
<proteinExistence type="inferred from homology"/>